<proteinExistence type="inferred from homology"/>
<accession>A6GZ75</accession>
<keyword id="KW-1185">Reference proteome</keyword>
<keyword id="KW-0687">Ribonucleoprotein</keyword>
<keyword id="KW-0689">Ribosomal protein</keyword>
<keyword id="KW-0694">RNA-binding</keyword>
<keyword id="KW-0699">rRNA-binding</keyword>
<gene>
    <name evidence="1" type="primary">rpsK</name>
    <name type="ordered locus">FP1315</name>
</gene>
<protein>
    <recommendedName>
        <fullName evidence="1">Small ribosomal subunit protein uS11</fullName>
    </recommendedName>
    <alternativeName>
        <fullName evidence="2">30S ribosomal protein S11</fullName>
    </alternativeName>
</protein>
<sequence length="127" mass="13721">MAKASTKKRKVIVESIGEAHISATFNNIIISLTNKKGEVVSWSSAGKMGFRGSKKNTPYAAQMAAEDCSKVAMEAGMKKVKVYVKGPGNGRESAIRSLHNAGIEVTEIIDVTPLPHNGCRPPKRRRV</sequence>
<feature type="chain" id="PRO_0000323340" description="Small ribosomal subunit protein uS11">
    <location>
        <begin position="1"/>
        <end position="127"/>
    </location>
</feature>
<name>RS11_FLAPJ</name>
<dbReference type="EMBL" id="AM398681">
    <property type="protein sequence ID" value="CAL43398.1"/>
    <property type="molecule type" value="Genomic_DNA"/>
</dbReference>
<dbReference type="RefSeq" id="WP_011963447.1">
    <property type="nucleotide sequence ID" value="NC_009613.3"/>
</dbReference>
<dbReference type="RefSeq" id="YP_001296209.1">
    <property type="nucleotide sequence ID" value="NC_009613.3"/>
</dbReference>
<dbReference type="SMR" id="A6GZ75"/>
<dbReference type="STRING" id="402612.FP1315"/>
<dbReference type="EnsemblBacteria" id="CAL43398">
    <property type="protein sequence ID" value="CAL43398"/>
    <property type="gene ID" value="FP1315"/>
</dbReference>
<dbReference type="GeneID" id="66553218"/>
<dbReference type="KEGG" id="fps:FP1315"/>
<dbReference type="PATRIC" id="fig|402612.5.peg.1332"/>
<dbReference type="eggNOG" id="COG0100">
    <property type="taxonomic scope" value="Bacteria"/>
</dbReference>
<dbReference type="HOGENOM" id="CLU_072439_5_0_10"/>
<dbReference type="OrthoDB" id="9806415at2"/>
<dbReference type="Proteomes" id="UP000006394">
    <property type="component" value="Chromosome"/>
</dbReference>
<dbReference type="GO" id="GO:1990904">
    <property type="term" value="C:ribonucleoprotein complex"/>
    <property type="evidence" value="ECO:0007669"/>
    <property type="project" value="UniProtKB-KW"/>
</dbReference>
<dbReference type="GO" id="GO:0005840">
    <property type="term" value="C:ribosome"/>
    <property type="evidence" value="ECO:0007669"/>
    <property type="project" value="UniProtKB-KW"/>
</dbReference>
<dbReference type="GO" id="GO:0019843">
    <property type="term" value="F:rRNA binding"/>
    <property type="evidence" value="ECO:0007669"/>
    <property type="project" value="UniProtKB-UniRule"/>
</dbReference>
<dbReference type="GO" id="GO:0003735">
    <property type="term" value="F:structural constituent of ribosome"/>
    <property type="evidence" value="ECO:0007669"/>
    <property type="project" value="InterPro"/>
</dbReference>
<dbReference type="GO" id="GO:0006412">
    <property type="term" value="P:translation"/>
    <property type="evidence" value="ECO:0007669"/>
    <property type="project" value="UniProtKB-UniRule"/>
</dbReference>
<dbReference type="FunFam" id="3.30.420.80:FF:000004">
    <property type="entry name" value="30S ribosomal protein S11"/>
    <property type="match status" value="1"/>
</dbReference>
<dbReference type="Gene3D" id="3.30.420.80">
    <property type="entry name" value="Ribosomal protein S11"/>
    <property type="match status" value="1"/>
</dbReference>
<dbReference type="HAMAP" id="MF_01310">
    <property type="entry name" value="Ribosomal_uS11"/>
    <property type="match status" value="1"/>
</dbReference>
<dbReference type="InterPro" id="IPR001971">
    <property type="entry name" value="Ribosomal_uS11"/>
</dbReference>
<dbReference type="InterPro" id="IPR019981">
    <property type="entry name" value="Ribosomal_uS11_bac-type"/>
</dbReference>
<dbReference type="InterPro" id="IPR018102">
    <property type="entry name" value="Ribosomal_uS11_CS"/>
</dbReference>
<dbReference type="InterPro" id="IPR036967">
    <property type="entry name" value="Ribosomal_uS11_sf"/>
</dbReference>
<dbReference type="NCBIfam" id="NF003698">
    <property type="entry name" value="PRK05309.1"/>
    <property type="match status" value="1"/>
</dbReference>
<dbReference type="NCBIfam" id="TIGR03632">
    <property type="entry name" value="uS11_bact"/>
    <property type="match status" value="1"/>
</dbReference>
<dbReference type="PANTHER" id="PTHR11759">
    <property type="entry name" value="40S RIBOSOMAL PROTEIN S14/30S RIBOSOMAL PROTEIN S11"/>
    <property type="match status" value="1"/>
</dbReference>
<dbReference type="Pfam" id="PF00411">
    <property type="entry name" value="Ribosomal_S11"/>
    <property type="match status" value="1"/>
</dbReference>
<dbReference type="PIRSF" id="PIRSF002131">
    <property type="entry name" value="Ribosomal_S11"/>
    <property type="match status" value="1"/>
</dbReference>
<dbReference type="SUPFAM" id="SSF53137">
    <property type="entry name" value="Translational machinery components"/>
    <property type="match status" value="1"/>
</dbReference>
<dbReference type="PROSITE" id="PS00054">
    <property type="entry name" value="RIBOSOMAL_S11"/>
    <property type="match status" value="1"/>
</dbReference>
<comment type="function">
    <text evidence="1">Located on the platform of the 30S subunit, it bridges several disparate RNA helices of the 16S rRNA. Forms part of the Shine-Dalgarno cleft in the 70S ribosome.</text>
</comment>
<comment type="subunit">
    <text evidence="1">Part of the 30S ribosomal subunit. Interacts with proteins S7 and S18. Binds to IF-3.</text>
</comment>
<comment type="similarity">
    <text evidence="1">Belongs to the universal ribosomal protein uS11 family.</text>
</comment>
<evidence type="ECO:0000255" key="1">
    <source>
        <dbReference type="HAMAP-Rule" id="MF_01310"/>
    </source>
</evidence>
<evidence type="ECO:0000305" key="2"/>
<organism>
    <name type="scientific">Flavobacterium psychrophilum (strain ATCC 49511 / DSM 21280 / CIP 103535 / JIP02/86)</name>
    <dbReference type="NCBI Taxonomy" id="402612"/>
    <lineage>
        <taxon>Bacteria</taxon>
        <taxon>Pseudomonadati</taxon>
        <taxon>Bacteroidota</taxon>
        <taxon>Flavobacteriia</taxon>
        <taxon>Flavobacteriales</taxon>
        <taxon>Flavobacteriaceae</taxon>
        <taxon>Flavobacterium</taxon>
    </lineage>
</organism>
<reference key="1">
    <citation type="journal article" date="2007" name="Nat. Biotechnol.">
        <title>Complete genome sequence of the fish pathogen Flavobacterium psychrophilum.</title>
        <authorList>
            <person name="Duchaud E."/>
            <person name="Boussaha M."/>
            <person name="Loux V."/>
            <person name="Bernardet J.-F."/>
            <person name="Michel C."/>
            <person name="Kerouault B."/>
            <person name="Mondot S."/>
            <person name="Nicolas P."/>
            <person name="Bossy R."/>
            <person name="Caron C."/>
            <person name="Bessieres P."/>
            <person name="Gibrat J.-F."/>
            <person name="Claverol S."/>
            <person name="Dumetz F."/>
            <person name="Le Henaff M."/>
            <person name="Benmansour A."/>
        </authorList>
    </citation>
    <scope>NUCLEOTIDE SEQUENCE [LARGE SCALE GENOMIC DNA]</scope>
    <source>
        <strain>ATCC 49511 / DSM 21280 / CIP 103535 / JIP02/86</strain>
    </source>
</reference>